<sequence length="454" mass="49677">MGSRLNFKSFVDGVSEQQPTVGTSLPLTRQNSVFSLTFDEFQNSWGGGIGKDFGSMNMDELLKNIWTAEESHSMMGNNTSYTNISNGNSGNTVINGGGNNIGGLAVGVGGESGGFFTGGSLQRQGSLTLPRTISQKRVDDVWKELMKEDDIGNGVVNGGTSGIPQRQQTLGEMTLEEFLVRAGVVREEPQPVESVTNFNGGFYGFGSNGGLGTASNGFVANQPQDLSGNGVAVRQDLLTAQTQPLQMQQPQMVQQPQMVQQPQQLIQTQERPFPKQTTIAFSNTVDVVNRSQPATQCQEVKPSILGIHNHPMNNNLLQAVDFKTGVTVAAVSPGSQMSPDLTPKSALDASLSPVPYMFGRVRKTGAVLEKVIERRQKRMIKNRESAARSRARKQAYTMELEAEIAQLKELNEELQKKQVEIMEKQKNQLLEPLRQPWGMGCKRQCLRRTLTGPW</sequence>
<reference key="1">
    <citation type="journal article" date="2000" name="J. Biol. Chem.">
        <title>ABFs, a family of ABA-responsive element binding factors.</title>
        <authorList>
            <person name="Choi H.-I."/>
            <person name="Hong J.-H."/>
            <person name="Ha J.-O."/>
            <person name="Kang J.-Y."/>
            <person name="Kim S.Y."/>
        </authorList>
    </citation>
    <scope>NUCLEOTIDE SEQUENCE [MRNA] (ISOFORM 1)</scope>
    <scope>DNA-BINDING</scope>
    <scope>INDUCTION</scope>
    <source>
        <strain>cv. Columbia</strain>
        <tissue>Seedling</tissue>
    </source>
</reference>
<reference key="2">
    <citation type="journal article" date="2002" name="Plant Physiol.">
        <title>Arabidopsis ABI5 subfamily members have distinct DNA-binding and transcriptional activities.</title>
        <authorList>
            <person name="Kim S.Y."/>
            <person name="Ma J."/>
            <person name="Perret P."/>
            <person name="Li Z."/>
            <person name="Thomas T.L."/>
        </authorList>
    </citation>
    <scope>NUCLEOTIDE SEQUENCE [MRNA] (ISOFORM 2)</scope>
</reference>
<reference key="3">
    <citation type="journal article" date="1999" name="Nature">
        <title>Sequence and analysis of chromosome 4 of the plant Arabidopsis thaliana.</title>
        <authorList>
            <person name="Mayer K.F.X."/>
            <person name="Schueller C."/>
            <person name="Wambutt R."/>
            <person name="Murphy G."/>
            <person name="Volckaert G."/>
            <person name="Pohl T."/>
            <person name="Duesterhoeft A."/>
            <person name="Stiekema W."/>
            <person name="Entian K.-D."/>
            <person name="Terryn N."/>
            <person name="Harris B."/>
            <person name="Ansorge W."/>
            <person name="Brandt P."/>
            <person name="Grivell L.A."/>
            <person name="Rieger M."/>
            <person name="Weichselgartner M."/>
            <person name="de Simone V."/>
            <person name="Obermaier B."/>
            <person name="Mache R."/>
            <person name="Mueller M."/>
            <person name="Kreis M."/>
            <person name="Delseny M."/>
            <person name="Puigdomenech P."/>
            <person name="Watson M."/>
            <person name="Schmidtheini T."/>
            <person name="Reichert B."/>
            <person name="Portetelle D."/>
            <person name="Perez-Alonso M."/>
            <person name="Boutry M."/>
            <person name="Bancroft I."/>
            <person name="Vos P."/>
            <person name="Hoheisel J."/>
            <person name="Zimmermann W."/>
            <person name="Wedler H."/>
            <person name="Ridley P."/>
            <person name="Langham S.-A."/>
            <person name="McCullagh B."/>
            <person name="Bilham L."/>
            <person name="Robben J."/>
            <person name="van der Schueren J."/>
            <person name="Grymonprez B."/>
            <person name="Chuang Y.-J."/>
            <person name="Vandenbussche F."/>
            <person name="Braeken M."/>
            <person name="Weltjens I."/>
            <person name="Voet M."/>
            <person name="Bastiaens I."/>
            <person name="Aert R."/>
            <person name="Defoor E."/>
            <person name="Weitzenegger T."/>
            <person name="Bothe G."/>
            <person name="Ramsperger U."/>
            <person name="Hilbert H."/>
            <person name="Braun M."/>
            <person name="Holzer E."/>
            <person name="Brandt A."/>
            <person name="Peters S."/>
            <person name="van Staveren M."/>
            <person name="Dirkse W."/>
            <person name="Mooijman P."/>
            <person name="Klein Lankhorst R."/>
            <person name="Rose M."/>
            <person name="Hauf J."/>
            <person name="Koetter P."/>
            <person name="Berneiser S."/>
            <person name="Hempel S."/>
            <person name="Feldpausch M."/>
            <person name="Lamberth S."/>
            <person name="Van den Daele H."/>
            <person name="De Keyser A."/>
            <person name="Buysshaert C."/>
            <person name="Gielen J."/>
            <person name="Villarroel R."/>
            <person name="De Clercq R."/>
            <person name="van Montagu M."/>
            <person name="Rogers J."/>
            <person name="Cronin A."/>
            <person name="Quail M.A."/>
            <person name="Bray-Allen S."/>
            <person name="Clark L."/>
            <person name="Doggett J."/>
            <person name="Hall S."/>
            <person name="Kay M."/>
            <person name="Lennard N."/>
            <person name="McLay K."/>
            <person name="Mayes R."/>
            <person name="Pettett A."/>
            <person name="Rajandream M.A."/>
            <person name="Lyne M."/>
            <person name="Benes V."/>
            <person name="Rechmann S."/>
            <person name="Borkova D."/>
            <person name="Bloecker H."/>
            <person name="Scharfe M."/>
            <person name="Grimm M."/>
            <person name="Loehnert T.-H."/>
            <person name="Dose S."/>
            <person name="de Haan M."/>
            <person name="Maarse A.C."/>
            <person name="Schaefer M."/>
            <person name="Mueller-Auer S."/>
            <person name="Gabel C."/>
            <person name="Fuchs M."/>
            <person name="Fartmann B."/>
            <person name="Granderath K."/>
            <person name="Dauner D."/>
            <person name="Herzl A."/>
            <person name="Neumann S."/>
            <person name="Argiriou A."/>
            <person name="Vitale D."/>
            <person name="Liguori R."/>
            <person name="Piravandi E."/>
            <person name="Massenet O."/>
            <person name="Quigley F."/>
            <person name="Clabauld G."/>
            <person name="Muendlein A."/>
            <person name="Felber R."/>
            <person name="Schnabl S."/>
            <person name="Hiller R."/>
            <person name="Schmidt W."/>
            <person name="Lecharny A."/>
            <person name="Aubourg S."/>
            <person name="Chefdor F."/>
            <person name="Cooke R."/>
            <person name="Berger C."/>
            <person name="Monfort A."/>
            <person name="Casacuberta E."/>
            <person name="Gibbons T."/>
            <person name="Weber N."/>
            <person name="Vandenbol M."/>
            <person name="Bargues M."/>
            <person name="Terol J."/>
            <person name="Torres A."/>
            <person name="Perez-Perez A."/>
            <person name="Purnelle B."/>
            <person name="Bent E."/>
            <person name="Johnson S."/>
            <person name="Tacon D."/>
            <person name="Jesse T."/>
            <person name="Heijnen L."/>
            <person name="Schwarz S."/>
            <person name="Scholler P."/>
            <person name="Heber S."/>
            <person name="Francs P."/>
            <person name="Bielke C."/>
            <person name="Frishman D."/>
            <person name="Haase D."/>
            <person name="Lemcke K."/>
            <person name="Mewes H.-W."/>
            <person name="Stocker S."/>
            <person name="Zaccaria P."/>
            <person name="Bevan M."/>
            <person name="Wilson R.K."/>
            <person name="de la Bastide M."/>
            <person name="Habermann K."/>
            <person name="Parnell L."/>
            <person name="Dedhia N."/>
            <person name="Gnoj L."/>
            <person name="Schutz K."/>
            <person name="Huang E."/>
            <person name="Spiegel L."/>
            <person name="Sekhon M."/>
            <person name="Murray J."/>
            <person name="Sheet P."/>
            <person name="Cordes M."/>
            <person name="Abu-Threideh J."/>
            <person name="Stoneking T."/>
            <person name="Kalicki J."/>
            <person name="Graves T."/>
            <person name="Harmon G."/>
            <person name="Edwards J."/>
            <person name="Latreille P."/>
            <person name="Courtney L."/>
            <person name="Cloud J."/>
            <person name="Abbott A."/>
            <person name="Scott K."/>
            <person name="Johnson D."/>
            <person name="Minx P."/>
            <person name="Bentley D."/>
            <person name="Fulton B."/>
            <person name="Miller N."/>
            <person name="Greco T."/>
            <person name="Kemp K."/>
            <person name="Kramer J."/>
            <person name="Fulton L."/>
            <person name="Mardis E."/>
            <person name="Dante M."/>
            <person name="Pepin K."/>
            <person name="Hillier L.W."/>
            <person name="Nelson J."/>
            <person name="Spieth J."/>
            <person name="Ryan E."/>
            <person name="Andrews S."/>
            <person name="Geisel C."/>
            <person name="Layman D."/>
            <person name="Du H."/>
            <person name="Ali J."/>
            <person name="Berghoff A."/>
            <person name="Jones K."/>
            <person name="Drone K."/>
            <person name="Cotton M."/>
            <person name="Joshu C."/>
            <person name="Antonoiu B."/>
            <person name="Zidanic M."/>
            <person name="Strong C."/>
            <person name="Sun H."/>
            <person name="Lamar B."/>
            <person name="Yordan C."/>
            <person name="Ma P."/>
            <person name="Zhong J."/>
            <person name="Preston R."/>
            <person name="Vil D."/>
            <person name="Shekher M."/>
            <person name="Matero A."/>
            <person name="Shah R."/>
            <person name="Swaby I.K."/>
            <person name="O'Shaughnessy A."/>
            <person name="Rodriguez M."/>
            <person name="Hoffman J."/>
            <person name="Till S."/>
            <person name="Granat S."/>
            <person name="Shohdy N."/>
            <person name="Hasegawa A."/>
            <person name="Hameed A."/>
            <person name="Lodhi M."/>
            <person name="Johnson A."/>
            <person name="Chen E."/>
            <person name="Marra M.A."/>
            <person name="Martienssen R."/>
            <person name="McCombie W.R."/>
        </authorList>
    </citation>
    <scope>NUCLEOTIDE SEQUENCE [LARGE SCALE GENOMIC DNA]</scope>
    <source>
        <strain>cv. Columbia</strain>
    </source>
</reference>
<reference key="4">
    <citation type="journal article" date="2017" name="Plant J.">
        <title>Araport11: a complete reannotation of the Arabidopsis thaliana reference genome.</title>
        <authorList>
            <person name="Cheng C.Y."/>
            <person name="Krishnakumar V."/>
            <person name="Chan A.P."/>
            <person name="Thibaud-Nissen F."/>
            <person name="Schobel S."/>
            <person name="Town C.D."/>
        </authorList>
    </citation>
    <scope>GENOME REANNOTATION</scope>
    <source>
        <strain>cv. Columbia</strain>
    </source>
</reference>
<reference key="5">
    <citation type="journal article" date="2003" name="Science">
        <title>Empirical analysis of transcriptional activity in the Arabidopsis genome.</title>
        <authorList>
            <person name="Yamada K."/>
            <person name="Lim J."/>
            <person name="Dale J.M."/>
            <person name="Chen H."/>
            <person name="Shinn P."/>
            <person name="Palm C.J."/>
            <person name="Southwick A.M."/>
            <person name="Wu H.C."/>
            <person name="Kim C.J."/>
            <person name="Nguyen M."/>
            <person name="Pham P.K."/>
            <person name="Cheuk R.F."/>
            <person name="Karlin-Newmann G."/>
            <person name="Liu S.X."/>
            <person name="Lam B."/>
            <person name="Sakano H."/>
            <person name="Wu T."/>
            <person name="Yu G."/>
            <person name="Miranda M."/>
            <person name="Quach H.L."/>
            <person name="Tripp M."/>
            <person name="Chang C.H."/>
            <person name="Lee J.M."/>
            <person name="Toriumi M.J."/>
            <person name="Chan M.M."/>
            <person name="Tang C.C."/>
            <person name="Onodera C.S."/>
            <person name="Deng J.M."/>
            <person name="Akiyama K."/>
            <person name="Ansari Y."/>
            <person name="Arakawa T."/>
            <person name="Banh J."/>
            <person name="Banno F."/>
            <person name="Bowser L."/>
            <person name="Brooks S.Y."/>
            <person name="Carninci P."/>
            <person name="Chao Q."/>
            <person name="Choy N."/>
            <person name="Enju A."/>
            <person name="Goldsmith A.D."/>
            <person name="Gurjal M."/>
            <person name="Hansen N.F."/>
            <person name="Hayashizaki Y."/>
            <person name="Johnson-Hopson C."/>
            <person name="Hsuan V.W."/>
            <person name="Iida K."/>
            <person name="Karnes M."/>
            <person name="Khan S."/>
            <person name="Koesema E."/>
            <person name="Ishida J."/>
            <person name="Jiang P.X."/>
            <person name="Jones T."/>
            <person name="Kawai J."/>
            <person name="Kamiya A."/>
            <person name="Meyers C."/>
            <person name="Nakajima M."/>
            <person name="Narusaka M."/>
            <person name="Seki M."/>
            <person name="Sakurai T."/>
            <person name="Satou M."/>
            <person name="Tamse R."/>
            <person name="Vaysberg M."/>
            <person name="Wallender E.K."/>
            <person name="Wong C."/>
            <person name="Yamamura Y."/>
            <person name="Yuan S."/>
            <person name="Shinozaki K."/>
            <person name="Davis R.W."/>
            <person name="Theologis A."/>
            <person name="Ecker J.R."/>
        </authorList>
    </citation>
    <scope>NUCLEOTIDE SEQUENCE [LARGE SCALE MRNA] (ISOFORM 1)</scope>
    <source>
        <strain>cv. Columbia</strain>
    </source>
</reference>
<reference key="6">
    <citation type="submission" date="2004-09" db="EMBL/GenBank/DDBJ databases">
        <title>Large-scale analysis of RIKEN Arabidopsis full-length (RAFL) cDNAs.</title>
        <authorList>
            <person name="Totoki Y."/>
            <person name="Seki M."/>
            <person name="Ishida J."/>
            <person name="Nakajima M."/>
            <person name="Enju A."/>
            <person name="Kamiya A."/>
            <person name="Narusaka M."/>
            <person name="Shin-i T."/>
            <person name="Nakagawa M."/>
            <person name="Sakamoto N."/>
            <person name="Oishi K."/>
            <person name="Kohara Y."/>
            <person name="Kobayashi M."/>
            <person name="Toyoda A."/>
            <person name="Sakaki Y."/>
            <person name="Sakurai T."/>
            <person name="Iida K."/>
            <person name="Akiyama K."/>
            <person name="Satou M."/>
            <person name="Toyoda T."/>
            <person name="Konagaya A."/>
            <person name="Carninci P."/>
            <person name="Kawai J."/>
            <person name="Hayashizaki Y."/>
            <person name="Shinozaki K."/>
        </authorList>
    </citation>
    <scope>NUCLEOTIDE SEQUENCE [LARGE SCALE MRNA] (ISOFORM 1)</scope>
    <source>
        <strain>cv. Columbia</strain>
    </source>
</reference>
<reference key="7">
    <citation type="journal article" date="2002" name="Plant Cell">
        <title>Arabidopsis basic leucine zipper proteins that mediate stress-responsive abscisic acid signaling.</title>
        <authorList>
            <person name="Kang J.-Y."/>
            <person name="Choi H.-I."/>
            <person name="Im M.-Y."/>
            <person name="Kim S.Y."/>
        </authorList>
    </citation>
    <scope>FUNCTION</scope>
    <scope>TISSUE SPECIFICITY</scope>
</reference>
<reference key="8">
    <citation type="journal article" date="2002" name="Trends Plant Sci.">
        <title>bZIP transcription factors in Arabidopsis.</title>
        <authorList>
            <person name="Jakoby M."/>
            <person name="Weisshaar B."/>
            <person name="Droege-Laser W."/>
            <person name="Vicente-Carbajosa J."/>
            <person name="Tiedemann J."/>
            <person name="Kroj T."/>
            <person name="Parcy F."/>
        </authorList>
    </citation>
    <scope>GENE FAMILY</scope>
    <scope>NOMENCLATURE</scope>
</reference>
<reference key="9">
    <citation type="journal article" date="2004" name="Plant J.">
        <title>ABF2, an ABRE-binding bZIP factor, is an essential component of glucose signaling and its overexpression affects multiple stress tolerance.</title>
        <authorList>
            <person name="Kim S."/>
            <person name="Kang J.-Y."/>
            <person name="Cho D.-I."/>
            <person name="Park J.H."/>
            <person name="Kim S.Y."/>
        </authorList>
    </citation>
    <scope>FUNCTION</scope>
    <scope>DISRUPTION PHENOTYPE</scope>
</reference>
<reference key="10">
    <citation type="journal article" date="2005" name="Plant Cell">
        <title>AREB1 is a transcription activator of novel ABRE-dependent ABA signaling that enhances drought stress tolerance in Arabidopsis.</title>
        <authorList>
            <person name="Fujita Y."/>
            <person name="Fujita M."/>
            <person name="Satoh R."/>
            <person name="Maruyama K."/>
            <person name="Parvez M.M."/>
            <person name="Seki M."/>
            <person name="Hiratsu K."/>
            <person name="Ohme-Takagi M."/>
            <person name="Shinozaki K."/>
            <person name="Yamaguchi-Shinozaki K."/>
        </authorList>
    </citation>
    <scope>INDUCTION</scope>
</reference>
<reference key="11">
    <citation type="journal article" date="2005" name="Plant Mol. Biol.">
        <title>Redundant and distinct functions of the ABA response loci ABA-INSENSITIVE(ABI)5 and ABRE-BINDING FACTOR (ABF)3.</title>
        <authorList>
            <person name="Finkelstein R.R."/>
            <person name="Gampala S.S."/>
            <person name="Lynch T.J."/>
            <person name="Thomas T.L."/>
            <person name="Rock C.D."/>
        </authorList>
    </citation>
    <scope>INTERACTION WITH ABI3</scope>
</reference>
<reference key="12">
    <citation type="journal article" date="2008" name="Plant Mol. Biol.">
        <title>A small plant-specific protein family of ABI five binding proteins (AFPs) regulates stress response in germinating Arabidopsis seeds and seedlings.</title>
        <authorList>
            <person name="Garcia M.E."/>
            <person name="Lynch T.J."/>
            <person name="Peeters J."/>
            <person name="Snowden C."/>
            <person name="Finkelstein R.R."/>
        </authorList>
    </citation>
    <scope>INTERACTION WITH AFP1; AFP2; AFP3 AND AFP4</scope>
</reference>
<protein>
    <recommendedName>
        <fullName>ABSCISIC ACID-INSENSITIVE 5-like protein 6</fullName>
    </recommendedName>
    <alternativeName>
        <fullName>Abscisic acid responsive elements-binding factor 3</fullName>
        <shortName>ABRE-binding factor 3</shortName>
    </alternativeName>
    <alternativeName>
        <fullName>Dc3 promoter-binding factor 5</fullName>
        <shortName>AtDPBF5</shortName>
    </alternativeName>
    <alternativeName>
        <fullName>bZIP transcription factor 37</fullName>
        <shortName>AtbZIP37</shortName>
    </alternativeName>
</protein>
<proteinExistence type="evidence at protein level"/>
<evidence type="ECO:0000250" key="1"/>
<evidence type="ECO:0000250" key="2">
    <source>
        <dbReference type="UniProtKB" id="Q9LES3"/>
    </source>
</evidence>
<evidence type="ECO:0000250" key="3">
    <source>
        <dbReference type="UniProtKB" id="Q9M7Q2"/>
    </source>
</evidence>
<evidence type="ECO:0000255" key="4"/>
<evidence type="ECO:0000255" key="5">
    <source>
        <dbReference type="PROSITE-ProRule" id="PRU00978"/>
    </source>
</evidence>
<evidence type="ECO:0000269" key="6">
    <source>
    </source>
</evidence>
<evidence type="ECO:0000269" key="7">
    <source>
    </source>
</evidence>
<evidence type="ECO:0000269" key="8">
    <source>
    </source>
</evidence>
<evidence type="ECO:0000269" key="9">
    <source>
    </source>
</evidence>
<evidence type="ECO:0000269" key="10">
    <source>
    </source>
</evidence>
<evidence type="ECO:0000269" key="11">
    <source>
    </source>
</evidence>
<evidence type="ECO:0000303" key="12">
    <source>
    </source>
</evidence>
<evidence type="ECO:0000305" key="13"/>
<keyword id="KW-0938">Abscisic acid signaling pathway</keyword>
<keyword id="KW-0010">Activator</keyword>
<keyword id="KW-0025">Alternative splicing</keyword>
<keyword id="KW-0238">DNA-binding</keyword>
<keyword id="KW-0539">Nucleus</keyword>
<keyword id="KW-0597">Phosphoprotein</keyword>
<keyword id="KW-1185">Reference proteome</keyword>
<keyword id="KW-0804">Transcription</keyword>
<keyword id="KW-0805">Transcription regulation</keyword>
<accession>Q9M7Q3</accession>
<accession>O49503</accession>
<accession>O49504</accession>
<accession>Q9C5Q1</accession>
<comment type="function">
    <text evidence="7 8">Binds to the ABA-responsive element (ABRE). Mediates stress-responsive ABA signaling.</text>
</comment>
<comment type="subunit">
    <text evidence="1 9 11">DNA-binding heterodimer (By similarity). Interacts with ABI3 and the AFP proteins AFP1, AFP2, AFP3 and AFP4.</text>
</comment>
<comment type="subcellular location">
    <subcellularLocation>
        <location evidence="5">Nucleus</location>
    </subcellularLocation>
</comment>
<comment type="alternative products">
    <event type="alternative splicing"/>
    <isoform>
        <id>Q9M7Q3-1</id>
        <name>1</name>
        <sequence type="displayed"/>
    </isoform>
    <isoform>
        <id>Q9M7Q3-2</id>
        <name>2</name>
        <sequence type="described" ref="VSP_036886"/>
    </isoform>
</comment>
<comment type="tissue specificity">
    <text evidence="7">Expressed in roots and flowers.</text>
</comment>
<comment type="induction">
    <text evidence="6 10">Up-regulated by drought, salt, abscisic acid (ABA).</text>
</comment>
<comment type="disruption phenotype">
    <text evidence="8">Defective in ABA and stress responses.</text>
</comment>
<comment type="miscellaneous">
    <molecule>Isoform 2</molecule>
    <text evidence="13">May be due to intron retention.</text>
</comment>
<comment type="similarity">
    <text evidence="13">Belongs to the bZIP family. ABI5 subfamily.</text>
</comment>
<comment type="sequence caution" evidence="13">
    <conflict type="erroneous gene model prediction">
        <sequence resource="EMBL-CDS" id="CAA17571"/>
    </conflict>
    <text>Was originally thought to correspond to two different genes At4g34000 and At4g34010.</text>
</comment>
<comment type="sequence caution" evidence="13">
    <conflict type="erroneous gene model prediction">
        <sequence resource="EMBL-CDS" id="CAA19882"/>
    </conflict>
    <text>Was originally thought to correspond to two different genes At4g34000 and At4g34010.</text>
</comment>
<comment type="sequence caution" evidence="13">
    <conflict type="erroneous gene model prediction">
        <sequence resource="EMBL-CDS" id="CAA19883"/>
    </conflict>
    <text>Was originally thought to correspond to two different genes At4g34000 and At4g34010.</text>
</comment>
<comment type="sequence caution" evidence="13">
    <conflict type="erroneous gene model prediction">
        <sequence resource="EMBL-CDS" id="CAB80117"/>
    </conflict>
    <text>Was originally thought to correspond to two different genes At4g34000 and At4g34010.</text>
</comment>
<comment type="sequence caution" evidence="13">
    <conflict type="erroneous gene model prediction">
        <sequence resource="EMBL-CDS" id="CAB80118"/>
    </conflict>
    <text>Was originally thought to correspond to two different genes At4g34000 and At4g34010.</text>
</comment>
<organism>
    <name type="scientific">Arabidopsis thaliana</name>
    <name type="common">Mouse-ear cress</name>
    <dbReference type="NCBI Taxonomy" id="3702"/>
    <lineage>
        <taxon>Eukaryota</taxon>
        <taxon>Viridiplantae</taxon>
        <taxon>Streptophyta</taxon>
        <taxon>Embryophyta</taxon>
        <taxon>Tracheophyta</taxon>
        <taxon>Spermatophyta</taxon>
        <taxon>Magnoliopsida</taxon>
        <taxon>eudicotyledons</taxon>
        <taxon>Gunneridae</taxon>
        <taxon>Pentapetalae</taxon>
        <taxon>rosids</taxon>
        <taxon>malvids</taxon>
        <taxon>Brassicales</taxon>
        <taxon>Brassicaceae</taxon>
        <taxon>Camelineae</taxon>
        <taxon>Arabidopsis</taxon>
    </lineage>
</organism>
<feature type="chain" id="PRO_0000369611" description="ABSCISIC ACID-INSENSITIVE 5-like protein 6">
    <location>
        <begin position="1"/>
        <end position="454"/>
    </location>
</feature>
<feature type="domain" description="bZIP" evidence="5">
    <location>
        <begin position="372"/>
        <end position="435"/>
    </location>
</feature>
<feature type="region of interest" description="Basic motif" evidence="5">
    <location>
        <begin position="374"/>
        <end position="393"/>
    </location>
</feature>
<feature type="region of interest" description="Leucine-zipper" evidence="5">
    <location>
        <begin position="400"/>
        <end position="414"/>
    </location>
</feature>
<feature type="modified residue" description="Phosphoserine" evidence="4">
    <location>
        <position position="32"/>
    </location>
</feature>
<feature type="modified residue" description="Phosphoserine" evidence="2">
    <location>
        <position position="55"/>
    </location>
</feature>
<feature type="modified residue" description="Phosphoserine" evidence="3">
    <location>
        <position position="126"/>
    </location>
</feature>
<feature type="modified residue" description="Phosphothreonine" evidence="4">
    <location>
        <position position="169"/>
    </location>
</feature>
<feature type="splice variant" id="VSP_036886" description="In isoform 2." evidence="12">
    <original>EIMEKQKNQLLEPLRQPWGMGCKRQCLRRTLTGPW</original>
    <variation>CLASSLSQLRISRFSYFLEVVFTDQMFHAG</variation>
    <location>
        <begin position="420"/>
        <end position="454"/>
    </location>
</feature>
<gene>
    <name type="primary">ABF3</name>
    <name type="synonym">BZIP37</name>
    <name type="synonym">DPBF5</name>
    <name type="ordered locus">At4g34000/At4g34010</name>
    <name type="ORF">F17I5.190/F17I5.200</name>
    <name type="ORF">F28A23.230</name>
</gene>
<name>AI5L6_ARATH</name>
<dbReference type="EMBL" id="AF093546">
    <property type="protein sequence ID" value="AAF27181.1"/>
    <property type="molecule type" value="mRNA"/>
</dbReference>
<dbReference type="EMBL" id="AF334210">
    <property type="protein sequence ID" value="AAK19603.1"/>
    <property type="molecule type" value="mRNA"/>
</dbReference>
<dbReference type="EMBL" id="AL021961">
    <property type="protein sequence ID" value="CAA17571.1"/>
    <property type="status" value="ALT_SEQ"/>
    <property type="molecule type" value="Genomic_DNA"/>
</dbReference>
<dbReference type="EMBL" id="AL031032">
    <property type="protein sequence ID" value="CAA19882.1"/>
    <property type="status" value="ALT_SEQ"/>
    <property type="molecule type" value="Genomic_DNA"/>
</dbReference>
<dbReference type="EMBL" id="AL031032">
    <property type="protein sequence ID" value="CAA19883.1"/>
    <property type="status" value="ALT_SEQ"/>
    <property type="molecule type" value="Genomic_DNA"/>
</dbReference>
<dbReference type="EMBL" id="AL161584">
    <property type="protein sequence ID" value="CAB80117.1"/>
    <property type="status" value="ALT_SEQ"/>
    <property type="molecule type" value="Genomic_DNA"/>
</dbReference>
<dbReference type="EMBL" id="AL161584">
    <property type="protein sequence ID" value="CAB80118.1"/>
    <property type="status" value="ALT_SEQ"/>
    <property type="molecule type" value="Genomic_DNA"/>
</dbReference>
<dbReference type="EMBL" id="CP002687">
    <property type="protein sequence ID" value="AEE86307.1"/>
    <property type="molecule type" value="Genomic_DNA"/>
</dbReference>
<dbReference type="EMBL" id="CP002687">
    <property type="protein sequence ID" value="AEE86308.1"/>
    <property type="molecule type" value="Genomic_DNA"/>
</dbReference>
<dbReference type="EMBL" id="CP002687">
    <property type="protein sequence ID" value="AEE86309.1"/>
    <property type="molecule type" value="Genomic_DNA"/>
</dbReference>
<dbReference type="EMBL" id="CP002687">
    <property type="protein sequence ID" value="ANM67065.1"/>
    <property type="molecule type" value="Genomic_DNA"/>
</dbReference>
<dbReference type="EMBL" id="AY054605">
    <property type="protein sequence ID" value="AAK96796.1"/>
    <property type="molecule type" value="mRNA"/>
</dbReference>
<dbReference type="EMBL" id="AY081467">
    <property type="protein sequence ID" value="AAM10029.1"/>
    <property type="molecule type" value="mRNA"/>
</dbReference>
<dbReference type="EMBL" id="AK175851">
    <property type="protein sequence ID" value="BAD43614.1"/>
    <property type="molecule type" value="mRNA"/>
</dbReference>
<dbReference type="PIR" id="T05228">
    <property type="entry name" value="T05228"/>
</dbReference>
<dbReference type="PIR" id="T05229">
    <property type="entry name" value="T05229"/>
</dbReference>
<dbReference type="RefSeq" id="NP_001031785.2">
    <molecule id="Q9M7Q3-2"/>
    <property type="nucleotide sequence ID" value="NM_001036708.3"/>
</dbReference>
<dbReference type="RefSeq" id="NP_001320130.1">
    <molecule id="Q9M7Q3-1"/>
    <property type="nucleotide sequence ID" value="NM_001342246.1"/>
</dbReference>
<dbReference type="RefSeq" id="NP_567949.1">
    <molecule id="Q9M7Q3-1"/>
    <property type="nucleotide sequence ID" value="NM_119562.5"/>
</dbReference>
<dbReference type="RefSeq" id="NP_849490.2">
    <molecule id="Q9M7Q3-1"/>
    <property type="nucleotide sequence ID" value="NM_179159.4"/>
</dbReference>
<dbReference type="SMR" id="Q9M7Q3"/>
<dbReference type="BioGRID" id="14829">
    <property type="interactions" value="25"/>
</dbReference>
<dbReference type="FunCoup" id="Q9M7Q3">
    <property type="interactions" value="299"/>
</dbReference>
<dbReference type="IntAct" id="Q9M7Q3">
    <property type="interactions" value="13"/>
</dbReference>
<dbReference type="STRING" id="3702.Q9M7Q3"/>
<dbReference type="GlyGen" id="Q9M7Q3">
    <property type="glycosylation" value="2 sites, 1 O-linked glycan (2 sites)"/>
</dbReference>
<dbReference type="iPTMnet" id="Q9M7Q3"/>
<dbReference type="PaxDb" id="3702-AT4G34000.1"/>
<dbReference type="ProteomicsDB" id="244804">
    <molecule id="Q9M7Q3-1"/>
</dbReference>
<dbReference type="EnsemblPlants" id="AT4G34000.1">
    <molecule id="Q9M7Q3-1"/>
    <property type="protein sequence ID" value="AT4G34000.1"/>
    <property type="gene ID" value="AT4G34000"/>
</dbReference>
<dbReference type="EnsemblPlants" id="AT4G34000.2">
    <molecule id="Q9M7Q3-1"/>
    <property type="protein sequence ID" value="AT4G34000.2"/>
    <property type="gene ID" value="AT4G34000"/>
</dbReference>
<dbReference type="EnsemblPlants" id="AT4G34000.3">
    <molecule id="Q9M7Q3-2"/>
    <property type="protein sequence ID" value="AT4G34000.3"/>
    <property type="gene ID" value="AT4G34000"/>
</dbReference>
<dbReference type="EnsemblPlants" id="AT4G34000.4">
    <molecule id="Q9M7Q3-1"/>
    <property type="protein sequence ID" value="AT4G34000.4"/>
    <property type="gene ID" value="AT4G34000"/>
</dbReference>
<dbReference type="GeneID" id="829547"/>
<dbReference type="Gramene" id="AT4G34000.1">
    <molecule id="Q9M7Q3-1"/>
    <property type="protein sequence ID" value="AT4G34000.1"/>
    <property type="gene ID" value="AT4G34000"/>
</dbReference>
<dbReference type="Gramene" id="AT4G34000.2">
    <molecule id="Q9M7Q3-1"/>
    <property type="protein sequence ID" value="AT4G34000.2"/>
    <property type="gene ID" value="AT4G34000"/>
</dbReference>
<dbReference type="Gramene" id="AT4G34000.3">
    <molecule id="Q9M7Q3-2"/>
    <property type="protein sequence ID" value="AT4G34000.3"/>
    <property type="gene ID" value="AT4G34000"/>
</dbReference>
<dbReference type="Gramene" id="AT4G34000.4">
    <molecule id="Q9M7Q3-1"/>
    <property type="protein sequence ID" value="AT4G34000.4"/>
    <property type="gene ID" value="AT4G34000"/>
</dbReference>
<dbReference type="KEGG" id="ath:AT4G34000"/>
<dbReference type="Araport" id="AT4G34000"/>
<dbReference type="TAIR" id="AT4G34000">
    <property type="gene designation" value="ABF3"/>
</dbReference>
<dbReference type="eggNOG" id="ENOG502QPP6">
    <property type="taxonomic scope" value="Eukaryota"/>
</dbReference>
<dbReference type="HOGENOM" id="CLU_043238_1_0_1"/>
<dbReference type="InParanoid" id="Q9M7Q3"/>
<dbReference type="OMA" id="YMFAGRV"/>
<dbReference type="PhylomeDB" id="Q9M7Q3"/>
<dbReference type="PRO" id="PR:Q9M7Q3"/>
<dbReference type="Proteomes" id="UP000006548">
    <property type="component" value="Chromosome 4"/>
</dbReference>
<dbReference type="ExpressionAtlas" id="Q9M7Q3">
    <property type="expression patterns" value="baseline and differential"/>
</dbReference>
<dbReference type="GO" id="GO:0005634">
    <property type="term" value="C:nucleus"/>
    <property type="evidence" value="ECO:0000318"/>
    <property type="project" value="GO_Central"/>
</dbReference>
<dbReference type="GO" id="GO:0003677">
    <property type="term" value="F:DNA binding"/>
    <property type="evidence" value="ECO:0000314"/>
    <property type="project" value="TAIR"/>
</dbReference>
<dbReference type="GO" id="GO:0003700">
    <property type="term" value="F:DNA-binding transcription factor activity"/>
    <property type="evidence" value="ECO:0000250"/>
    <property type="project" value="TAIR"/>
</dbReference>
<dbReference type="GO" id="GO:0043565">
    <property type="term" value="F:sequence-specific DNA binding"/>
    <property type="evidence" value="ECO:0000353"/>
    <property type="project" value="TAIR"/>
</dbReference>
<dbReference type="GO" id="GO:0000976">
    <property type="term" value="F:transcription cis-regulatory region binding"/>
    <property type="evidence" value="ECO:0000353"/>
    <property type="project" value="TAIR"/>
</dbReference>
<dbReference type="GO" id="GO:0009738">
    <property type="term" value="P:abscisic acid-activated signaling pathway"/>
    <property type="evidence" value="ECO:0000315"/>
    <property type="project" value="TAIR"/>
</dbReference>
<dbReference type="GO" id="GO:0045893">
    <property type="term" value="P:positive regulation of DNA-templated transcription"/>
    <property type="evidence" value="ECO:0007669"/>
    <property type="project" value="InterPro"/>
</dbReference>
<dbReference type="GO" id="GO:0009737">
    <property type="term" value="P:response to abscisic acid"/>
    <property type="evidence" value="ECO:0000270"/>
    <property type="project" value="TAIR"/>
</dbReference>
<dbReference type="GO" id="GO:0009651">
    <property type="term" value="P:response to salt stress"/>
    <property type="evidence" value="ECO:0000270"/>
    <property type="project" value="TAIR"/>
</dbReference>
<dbReference type="GO" id="GO:0009414">
    <property type="term" value="P:response to water deprivation"/>
    <property type="evidence" value="ECO:0000270"/>
    <property type="project" value="TAIR"/>
</dbReference>
<dbReference type="CDD" id="cd14707">
    <property type="entry name" value="bZIP_plant_BZIP46"/>
    <property type="match status" value="1"/>
</dbReference>
<dbReference type="FunFam" id="1.20.5.170:FF:000048">
    <property type="entry name" value="ABSCISIC ACID-INSENSITIVE 5-like protein 5"/>
    <property type="match status" value="1"/>
</dbReference>
<dbReference type="Gene3D" id="1.20.5.170">
    <property type="match status" value="1"/>
</dbReference>
<dbReference type="InterPro" id="IPR004827">
    <property type="entry name" value="bZIP"/>
</dbReference>
<dbReference type="InterPro" id="IPR043452">
    <property type="entry name" value="BZIP46-like"/>
</dbReference>
<dbReference type="InterPro" id="IPR046347">
    <property type="entry name" value="bZIP_sf"/>
</dbReference>
<dbReference type="PANTHER" id="PTHR22952:SF470">
    <property type="entry name" value="ABSCISIC ACID-INSENSITIVE 5-LIKE PROTEIN 6"/>
    <property type="match status" value="1"/>
</dbReference>
<dbReference type="PANTHER" id="PTHR22952">
    <property type="entry name" value="CAMP-RESPONSE ELEMENT BINDING PROTEIN-RELATED"/>
    <property type="match status" value="1"/>
</dbReference>
<dbReference type="Pfam" id="PF00170">
    <property type="entry name" value="bZIP_1"/>
    <property type="match status" value="1"/>
</dbReference>
<dbReference type="SMART" id="SM00338">
    <property type="entry name" value="BRLZ"/>
    <property type="match status" value="1"/>
</dbReference>
<dbReference type="SUPFAM" id="SSF57959">
    <property type="entry name" value="Leucine zipper domain"/>
    <property type="match status" value="1"/>
</dbReference>
<dbReference type="PROSITE" id="PS50217">
    <property type="entry name" value="BZIP"/>
    <property type="match status" value="1"/>
</dbReference>
<dbReference type="PROSITE" id="PS00036">
    <property type="entry name" value="BZIP_BASIC"/>
    <property type="match status" value="1"/>
</dbReference>